<dbReference type="EC" id="2.3.2.27" evidence="2"/>
<dbReference type="EMBL" id="AL670413">
    <property type="status" value="NOT_ANNOTATED_CDS"/>
    <property type="molecule type" value="Genomic_DNA"/>
</dbReference>
<dbReference type="EMBL" id="CH466594">
    <property type="protein sequence ID" value="EDL14991.1"/>
    <property type="molecule type" value="Genomic_DNA"/>
</dbReference>
<dbReference type="EMBL" id="BC147304">
    <property type="protein sequence ID" value="AAI47305.1"/>
    <property type="molecule type" value="mRNA"/>
</dbReference>
<dbReference type="EMBL" id="BC147305">
    <property type="protein sequence ID" value="AAI47306.1"/>
    <property type="molecule type" value="mRNA"/>
</dbReference>
<dbReference type="CCDS" id="CCDS19021.1"/>
<dbReference type="RefSeq" id="NP_001035866.1">
    <property type="nucleotide sequence ID" value="NM_001042407.1"/>
</dbReference>
<dbReference type="SMR" id="B1AUE5"/>
<dbReference type="BioGRID" id="579973">
    <property type="interactions" value="2"/>
</dbReference>
<dbReference type="FunCoup" id="B1AUE5">
    <property type="interactions" value="1956"/>
</dbReference>
<dbReference type="STRING" id="10090.ENSMUSP00000099469"/>
<dbReference type="iPTMnet" id="B1AUE5"/>
<dbReference type="PhosphoSitePlus" id="B1AUE5"/>
<dbReference type="SwissPalm" id="B1AUE5"/>
<dbReference type="PaxDb" id="10090-ENSMUSP00000099469"/>
<dbReference type="PeptideAtlas" id="B1AUE5"/>
<dbReference type="ProteomicsDB" id="301791"/>
<dbReference type="Pumba" id="B1AUE5"/>
<dbReference type="Antibodypedia" id="26727">
    <property type="antibodies" value="168 antibodies from 27 providers"/>
</dbReference>
<dbReference type="Ensembl" id="ENSMUST00000103180.4">
    <property type="protein sequence ID" value="ENSMUSP00000099469.4"/>
    <property type="gene ID" value="ENSMUSG00000029047.14"/>
</dbReference>
<dbReference type="GeneID" id="668173"/>
<dbReference type="KEGG" id="mmu:668173"/>
<dbReference type="UCSC" id="uc008wcs.1">
    <property type="organism name" value="mouse"/>
</dbReference>
<dbReference type="AGR" id="MGI:2684988"/>
<dbReference type="CTD" id="5192"/>
<dbReference type="MGI" id="MGI:2684988">
    <property type="gene designation" value="Pex10"/>
</dbReference>
<dbReference type="VEuPathDB" id="HostDB:ENSMUSG00000029047"/>
<dbReference type="eggNOG" id="KOG0317">
    <property type="taxonomic scope" value="Eukaryota"/>
</dbReference>
<dbReference type="GeneTree" id="ENSGT00510000048446"/>
<dbReference type="HOGENOM" id="CLU_041707_1_0_1"/>
<dbReference type="InParanoid" id="B1AUE5"/>
<dbReference type="OMA" id="YCDVVQL"/>
<dbReference type="OrthoDB" id="6270329at2759"/>
<dbReference type="PhylomeDB" id="B1AUE5"/>
<dbReference type="TreeFam" id="TF326491"/>
<dbReference type="Reactome" id="R-MMU-8866654">
    <property type="pathway name" value="E3 ubiquitin ligases ubiquitinate target proteins"/>
</dbReference>
<dbReference type="Reactome" id="R-MMU-9033241">
    <property type="pathway name" value="Peroxisomal protein import"/>
</dbReference>
<dbReference type="UniPathway" id="UPA00143"/>
<dbReference type="BioGRID-ORCS" id="668173">
    <property type="hits" value="11 hits in 78 CRISPR screens"/>
</dbReference>
<dbReference type="CD-CODE" id="CE726F99">
    <property type="entry name" value="Postsynaptic density"/>
</dbReference>
<dbReference type="PRO" id="PR:B1AUE5"/>
<dbReference type="Proteomes" id="UP000000589">
    <property type="component" value="Chromosome 4"/>
</dbReference>
<dbReference type="RNAct" id="B1AUE5">
    <property type="molecule type" value="protein"/>
</dbReference>
<dbReference type="Bgee" id="ENSMUSG00000029047">
    <property type="expression patterns" value="Expressed in yolk sac and 219 other cell types or tissues"/>
</dbReference>
<dbReference type="GO" id="GO:0005778">
    <property type="term" value="C:peroxisomal membrane"/>
    <property type="evidence" value="ECO:0007669"/>
    <property type="project" value="UniProtKB-SubCell"/>
</dbReference>
<dbReference type="GO" id="GO:0005777">
    <property type="term" value="C:peroxisome"/>
    <property type="evidence" value="ECO:0000266"/>
    <property type="project" value="MGI"/>
</dbReference>
<dbReference type="GO" id="GO:0061630">
    <property type="term" value="F:ubiquitin protein ligase activity"/>
    <property type="evidence" value="ECO:0007669"/>
    <property type="project" value="Ensembl"/>
</dbReference>
<dbReference type="GO" id="GO:0008270">
    <property type="term" value="F:zinc ion binding"/>
    <property type="evidence" value="ECO:0007669"/>
    <property type="project" value="UniProtKB-KW"/>
</dbReference>
<dbReference type="GO" id="GO:0034614">
    <property type="term" value="P:cellular response to reactive oxygen species"/>
    <property type="evidence" value="ECO:0007669"/>
    <property type="project" value="Ensembl"/>
</dbReference>
<dbReference type="GO" id="GO:0016562">
    <property type="term" value="P:protein import into peroxisome matrix, receptor recycling"/>
    <property type="evidence" value="ECO:0007669"/>
    <property type="project" value="Ensembl"/>
</dbReference>
<dbReference type="GO" id="GO:0000209">
    <property type="term" value="P:protein polyubiquitination"/>
    <property type="evidence" value="ECO:0007669"/>
    <property type="project" value="Ensembl"/>
</dbReference>
<dbReference type="CDD" id="cd16527">
    <property type="entry name" value="RING-HC_PEX10"/>
    <property type="match status" value="1"/>
</dbReference>
<dbReference type="FunFam" id="3.30.40.10:FF:000332">
    <property type="entry name" value="Peroxisome biogenesis factor 10"/>
    <property type="match status" value="1"/>
</dbReference>
<dbReference type="Gene3D" id="3.30.40.10">
    <property type="entry name" value="Zinc/RING finger domain, C3HC4 (zinc finger)"/>
    <property type="match status" value="1"/>
</dbReference>
<dbReference type="InterPro" id="IPR025654">
    <property type="entry name" value="PEX2/10"/>
</dbReference>
<dbReference type="InterPro" id="IPR006845">
    <property type="entry name" value="Pex_N"/>
</dbReference>
<dbReference type="InterPro" id="IPR001841">
    <property type="entry name" value="Znf_RING"/>
</dbReference>
<dbReference type="InterPro" id="IPR013083">
    <property type="entry name" value="Znf_RING/FYVE/PHD"/>
</dbReference>
<dbReference type="InterPro" id="IPR017907">
    <property type="entry name" value="Znf_RING_CS"/>
</dbReference>
<dbReference type="PANTHER" id="PTHR23350">
    <property type="entry name" value="PEROXISOME ASSEMBLY PROTEIN 10"/>
    <property type="match status" value="1"/>
</dbReference>
<dbReference type="PANTHER" id="PTHR23350:SF0">
    <property type="entry name" value="PEROXISOME BIOGENESIS FACTOR 10"/>
    <property type="match status" value="1"/>
</dbReference>
<dbReference type="Pfam" id="PF04757">
    <property type="entry name" value="Pex2_Pex12"/>
    <property type="match status" value="1"/>
</dbReference>
<dbReference type="Pfam" id="PF13639">
    <property type="entry name" value="zf-RING_2"/>
    <property type="match status" value="1"/>
</dbReference>
<dbReference type="SMART" id="SM00184">
    <property type="entry name" value="RING"/>
    <property type="match status" value="1"/>
</dbReference>
<dbReference type="SUPFAM" id="SSF57850">
    <property type="entry name" value="RING/U-box"/>
    <property type="match status" value="1"/>
</dbReference>
<dbReference type="PROSITE" id="PS00518">
    <property type="entry name" value="ZF_RING_1"/>
    <property type="match status" value="1"/>
</dbReference>
<dbReference type="PROSITE" id="PS50089">
    <property type="entry name" value="ZF_RING_2"/>
    <property type="match status" value="1"/>
</dbReference>
<accession>B1AUE5</accession>
<comment type="function">
    <text evidence="2 3">E3 ubiquitin-protein ligase component of a retrotranslocation channel required for peroxisome organization by mediating export of the PEX5 receptor from peroxisomes to the cytosol, thereby promoting PEX5 recycling (By similarity). The retrotranslocation channel is composed of PEX2, PEX10 and PEX12; each subunit contributing transmembrane segments that coassemble into an open channel that specifically allows the passage of PEX5 through the peroxisomal membrane (By similarity). PEX10 also regulates PEX5 recycling by acting as a E3 ubiquitin-protein ligase (By similarity). When PEX5 recycling is compromised, PEX10 catalyzes polyubiquitination of PEX5 during its passage through the retrotranslocation channel, leading to its degradation (By similarity).</text>
</comment>
<comment type="catalytic activity">
    <reaction evidence="2">
        <text>S-ubiquitinyl-[E2 ubiquitin-conjugating enzyme]-L-cysteine + [acceptor protein]-L-lysine = [E2 ubiquitin-conjugating enzyme]-L-cysteine + N(6)-ubiquitinyl-[acceptor protein]-L-lysine.</text>
        <dbReference type="EC" id="2.3.2.27"/>
    </reaction>
</comment>
<comment type="activity regulation">
    <text evidence="2">The E3 ubiquitin-protein ligase activity is stimulated by PEX12.</text>
</comment>
<comment type="pathway">
    <text evidence="2">Protein modification; protein ubiquitination.</text>
</comment>
<comment type="subunit">
    <text evidence="2">Component of the PEX2-PEX10-PEX12 retrotranslocation channel, composed of PEX2, PEX10 and PEX12. Interacts with PEX19.</text>
</comment>
<comment type="subcellular location">
    <subcellularLocation>
        <location evidence="2">Peroxisome membrane</location>
        <topology evidence="4">Multi-pass membrane protein</topology>
    </subcellularLocation>
</comment>
<comment type="domain">
    <text evidence="1">The three subunits of the retrotranslocation channel (PEX2, PEX10 and PEX12) coassemble in the membrane into a channel with an open 10 Angstrom pore. The RING-type zinc-fingers that catalyze PEX5 receptor ubiquitination are positioned above the pore on the cytosolic side of the complex.</text>
</comment>
<comment type="similarity">
    <text evidence="7">Belongs to the pex2/pex10/pex12 family.</text>
</comment>
<name>PEX10_MOUSE</name>
<organism>
    <name type="scientific">Mus musculus</name>
    <name type="common">Mouse</name>
    <dbReference type="NCBI Taxonomy" id="10090"/>
    <lineage>
        <taxon>Eukaryota</taxon>
        <taxon>Metazoa</taxon>
        <taxon>Chordata</taxon>
        <taxon>Craniata</taxon>
        <taxon>Vertebrata</taxon>
        <taxon>Euteleostomi</taxon>
        <taxon>Mammalia</taxon>
        <taxon>Eutheria</taxon>
        <taxon>Euarchontoglires</taxon>
        <taxon>Glires</taxon>
        <taxon>Rodentia</taxon>
        <taxon>Myomorpha</taxon>
        <taxon>Muroidea</taxon>
        <taxon>Muridae</taxon>
        <taxon>Murinae</taxon>
        <taxon>Mus</taxon>
        <taxon>Mus</taxon>
    </lineage>
</organism>
<reference key="1">
    <citation type="journal article" date="2009" name="PLoS Biol.">
        <title>Lineage-specific biology revealed by a finished genome assembly of the mouse.</title>
        <authorList>
            <person name="Church D.M."/>
            <person name="Goodstadt L."/>
            <person name="Hillier L.W."/>
            <person name="Zody M.C."/>
            <person name="Goldstein S."/>
            <person name="She X."/>
            <person name="Bult C.J."/>
            <person name="Agarwala R."/>
            <person name="Cherry J.L."/>
            <person name="DiCuccio M."/>
            <person name="Hlavina W."/>
            <person name="Kapustin Y."/>
            <person name="Meric P."/>
            <person name="Maglott D."/>
            <person name="Birtle Z."/>
            <person name="Marques A.C."/>
            <person name="Graves T."/>
            <person name="Zhou S."/>
            <person name="Teague B."/>
            <person name="Potamousis K."/>
            <person name="Churas C."/>
            <person name="Place M."/>
            <person name="Herschleb J."/>
            <person name="Runnheim R."/>
            <person name="Forrest D."/>
            <person name="Amos-Landgraf J."/>
            <person name="Schwartz D.C."/>
            <person name="Cheng Z."/>
            <person name="Lindblad-Toh K."/>
            <person name="Eichler E.E."/>
            <person name="Ponting C.P."/>
        </authorList>
    </citation>
    <scope>NUCLEOTIDE SEQUENCE [LARGE SCALE GENOMIC DNA]</scope>
    <source>
        <strain>C57BL/6J</strain>
    </source>
</reference>
<reference key="2">
    <citation type="submission" date="2005-07" db="EMBL/GenBank/DDBJ databases">
        <authorList>
            <person name="Mural R.J."/>
            <person name="Adams M.D."/>
            <person name="Myers E.W."/>
            <person name="Smith H.O."/>
            <person name="Venter J.C."/>
        </authorList>
    </citation>
    <scope>NUCLEOTIDE SEQUENCE [LARGE SCALE GENOMIC DNA]</scope>
</reference>
<reference key="3">
    <citation type="journal article" date="2004" name="Genome Res.">
        <title>The status, quality, and expansion of the NIH full-length cDNA project: the Mammalian Gene Collection (MGC).</title>
        <authorList>
            <consortium name="The MGC Project Team"/>
        </authorList>
    </citation>
    <scope>NUCLEOTIDE SEQUENCE [LARGE SCALE MRNA]</scope>
    <source>
        <tissue>Brain</tissue>
    </source>
</reference>
<sequence length="324" mass="37157">MARAGAPEVIRAAQKDEYYLGGLRSAAGEALHSLAGAKKWLEWRKEIELLSDIAYFGLTTIAGYQTLGEEYVGIIQVDPSQQRVPSRLRRAALVALHAVLPYLLDKALLPLEQELQADGDAPRASQGSLLPGGRSRSGARRWVRHHAATLTEQQRKALQRAVFILRQGFACLHRLHVAWFYIHGTFYHLAKRLAGITYLRTRRLPGEDQKARTSYGLLGLISLLHLVLSMGLRLYSFRQKQRARKEWRLHRNLSHRRSSLEDRAVCRTPLCTLCLEERRHSTATPCGHLFCWECITEWCNTKTECPLCREKFPPQKLVYLRHYR</sequence>
<protein>
    <recommendedName>
        <fullName evidence="7">Peroxisome biogenesis factor 10</fullName>
        <ecNumber evidence="2">2.3.2.27</ecNumber>
    </recommendedName>
    <alternativeName>
        <fullName evidence="7">Peroxin-10</fullName>
    </alternativeName>
    <alternativeName>
        <fullName>Peroxisomal biogenesis factor 10</fullName>
    </alternativeName>
    <alternativeName>
        <fullName>Peroxisome assembly protein 10</fullName>
    </alternativeName>
</protein>
<evidence type="ECO:0000250" key="1">
    <source>
        <dbReference type="UniProtKB" id="G2Q0E2"/>
    </source>
</evidence>
<evidence type="ECO:0000250" key="2">
    <source>
        <dbReference type="UniProtKB" id="O60683"/>
    </source>
</evidence>
<evidence type="ECO:0000250" key="3">
    <source>
        <dbReference type="UniProtKB" id="Q05568"/>
    </source>
</evidence>
<evidence type="ECO:0000255" key="4"/>
<evidence type="ECO:0000255" key="5">
    <source>
        <dbReference type="PROSITE-ProRule" id="PRU00175"/>
    </source>
</evidence>
<evidence type="ECO:0000256" key="6">
    <source>
        <dbReference type="SAM" id="MobiDB-lite"/>
    </source>
</evidence>
<evidence type="ECO:0000305" key="7"/>
<keyword id="KW-0472">Membrane</keyword>
<keyword id="KW-0479">Metal-binding</keyword>
<keyword id="KW-0576">Peroxisome</keyword>
<keyword id="KW-0962">Peroxisome biogenesis</keyword>
<keyword id="KW-0653">Protein transport</keyword>
<keyword id="KW-1185">Reference proteome</keyword>
<keyword id="KW-0808">Transferase</keyword>
<keyword id="KW-0812">Transmembrane</keyword>
<keyword id="KW-1133">Transmembrane helix</keyword>
<keyword id="KW-0813">Transport</keyword>
<keyword id="KW-0833">Ubl conjugation pathway</keyword>
<keyword id="KW-0862">Zinc</keyword>
<keyword id="KW-0863">Zinc-finger</keyword>
<gene>
    <name type="primary">Pex10</name>
</gene>
<feature type="chain" id="PRO_0000346862" description="Peroxisome biogenesis factor 10">
    <location>
        <begin position="1"/>
        <end position="324"/>
    </location>
</feature>
<feature type="topological domain" description="Peroxisomal matrix" evidence="1">
    <location>
        <begin position="1"/>
        <end position="5"/>
    </location>
</feature>
<feature type="transmembrane region" description="Helical; Name=TM1" evidence="1">
    <location>
        <begin position="6"/>
        <end position="35"/>
    </location>
</feature>
<feature type="topological domain" description="Cytoplasmic" evidence="1">
    <location>
        <position position="36"/>
    </location>
</feature>
<feature type="transmembrane region" description="Helical; Name=TM2" evidence="1">
    <location>
        <begin position="37"/>
        <end position="58"/>
    </location>
</feature>
<feature type="topological domain" description="Peroxisomal matrix" evidence="1">
    <location>
        <begin position="59"/>
        <end position="87"/>
    </location>
</feature>
<feature type="transmembrane region" description="Helical; Name=TM3" evidence="1">
    <location>
        <begin position="88"/>
        <end position="120"/>
    </location>
</feature>
<feature type="topological domain" description="Cytoplasmic" evidence="1">
    <location>
        <begin position="121"/>
        <end position="145"/>
    </location>
</feature>
<feature type="transmembrane region" description="Helical; Name=TM4" evidence="1">
    <location>
        <begin position="146"/>
        <end position="183"/>
    </location>
</feature>
<feature type="topological domain" description="Peroxisomal matrix" evidence="1">
    <location>
        <begin position="184"/>
        <end position="214"/>
    </location>
</feature>
<feature type="transmembrane region" description="Helical; Name=TM5" evidence="1">
    <location>
        <begin position="215"/>
        <end position="234"/>
    </location>
</feature>
<feature type="topological domain" description="Cytoplasmic" evidence="1">
    <location>
        <begin position="235"/>
        <end position="324"/>
    </location>
</feature>
<feature type="zinc finger region" description="RING-type" evidence="5">
    <location>
        <begin position="271"/>
        <end position="309"/>
    </location>
</feature>
<feature type="region of interest" description="Disordered" evidence="6">
    <location>
        <begin position="119"/>
        <end position="139"/>
    </location>
</feature>
<feature type="compositionally biased region" description="Low complexity" evidence="6">
    <location>
        <begin position="125"/>
        <end position="136"/>
    </location>
</feature>
<feature type="binding site" evidence="1">
    <location>
        <position position="271"/>
    </location>
    <ligand>
        <name>Zn(2+)</name>
        <dbReference type="ChEBI" id="CHEBI:29105"/>
        <label>1</label>
    </ligand>
</feature>
<feature type="binding site" evidence="1">
    <location>
        <position position="274"/>
    </location>
    <ligand>
        <name>Zn(2+)</name>
        <dbReference type="ChEBI" id="CHEBI:29105"/>
        <label>1</label>
    </ligand>
</feature>
<feature type="binding site" evidence="1">
    <location>
        <position position="286"/>
    </location>
    <ligand>
        <name>Zn(2+)</name>
        <dbReference type="ChEBI" id="CHEBI:29105"/>
        <label>2</label>
    </ligand>
</feature>
<feature type="binding site" evidence="1">
    <location>
        <position position="288"/>
    </location>
    <ligand>
        <name>Zn(2+)</name>
        <dbReference type="ChEBI" id="CHEBI:29105"/>
        <label>2</label>
    </ligand>
</feature>
<feature type="binding site" evidence="1">
    <location>
        <position position="291"/>
    </location>
    <ligand>
        <name>Zn(2+)</name>
        <dbReference type="ChEBI" id="CHEBI:29105"/>
        <label>1</label>
    </ligand>
</feature>
<feature type="binding site" evidence="1">
    <location>
        <position position="294"/>
    </location>
    <ligand>
        <name>Zn(2+)</name>
        <dbReference type="ChEBI" id="CHEBI:29105"/>
        <label>1</label>
    </ligand>
</feature>
<feature type="binding site" evidence="1">
    <location>
        <position position="305"/>
    </location>
    <ligand>
        <name>Zn(2+)</name>
        <dbReference type="ChEBI" id="CHEBI:29105"/>
        <label>2</label>
    </ligand>
</feature>
<feature type="binding site" evidence="1">
    <location>
        <position position="308"/>
    </location>
    <ligand>
        <name>Zn(2+)</name>
        <dbReference type="ChEBI" id="CHEBI:29105"/>
        <label>2</label>
    </ligand>
</feature>
<proteinExistence type="evidence at transcript level"/>